<name>PERR_CLOAB</name>
<organism>
    <name type="scientific">Clostridium acetobutylicum (strain ATCC 824 / DSM 792 / JCM 1419 / IAM 19013 / LMG 5710 / NBRC 13948 / NRRL B-527 / VKM B-1787 / 2291 / W)</name>
    <dbReference type="NCBI Taxonomy" id="272562"/>
    <lineage>
        <taxon>Bacteria</taxon>
        <taxon>Bacillati</taxon>
        <taxon>Bacillota</taxon>
        <taxon>Clostridia</taxon>
        <taxon>Eubacteriales</taxon>
        <taxon>Clostridiaceae</taxon>
        <taxon>Clostridium</taxon>
    </lineage>
</organism>
<keyword id="KW-0216">Detoxification</keyword>
<keyword id="KW-0238">DNA-binding</keyword>
<keyword id="KW-0479">Metal-binding</keyword>
<keyword id="KW-1185">Reference proteome</keyword>
<keyword id="KW-0678">Repressor</keyword>
<keyword id="KW-0804">Transcription</keyword>
<keyword id="KW-0805">Transcription regulation</keyword>
<keyword id="KW-0862">Zinc</keyword>
<protein>
    <recommendedName>
        <fullName>Transcriptional regulator PerR</fullName>
    </recommendedName>
    <alternativeName>
        <fullName>Oxidative stress genes repressor</fullName>
    </alternativeName>
</protein>
<evidence type="ECO:0000250" key="1"/>
<evidence type="ECO:0000269" key="2">
    <source>
    </source>
</evidence>
<evidence type="ECO:0000269" key="3">
    <source>
    </source>
</evidence>
<evidence type="ECO:0000305" key="4"/>
<proteinExistence type="evidence at protein level"/>
<feature type="chain" id="PRO_0000405537" description="Transcriptional regulator PerR">
    <location>
        <begin position="1"/>
        <end position="138"/>
    </location>
</feature>
<feature type="region of interest" description="DNA-binding" evidence="1">
    <location>
        <begin position="1"/>
        <end position="73"/>
    </location>
</feature>
<feature type="binding site" evidence="1">
    <location>
        <position position="91"/>
    </location>
    <ligand>
        <name>Zn(2+)</name>
        <dbReference type="ChEBI" id="CHEBI:29105"/>
    </ligand>
</feature>
<feature type="binding site" evidence="1">
    <location>
        <position position="94"/>
    </location>
    <ligand>
        <name>Zn(2+)</name>
        <dbReference type="ChEBI" id="CHEBI:29105"/>
    </ligand>
</feature>
<feature type="binding site" evidence="1">
    <location>
        <position position="131"/>
    </location>
    <ligand>
        <name>Zn(2+)</name>
        <dbReference type="ChEBI" id="CHEBI:29105"/>
    </ligand>
</feature>
<feature type="binding site" evidence="1">
    <location>
        <position position="134"/>
    </location>
    <ligand>
        <name>Zn(2+)</name>
        <dbReference type="ChEBI" id="CHEBI:29105"/>
    </ligand>
</feature>
<dbReference type="EMBL" id="AE001437">
    <property type="protein sequence ID" value="AAK80581.1"/>
    <property type="molecule type" value="Genomic_DNA"/>
</dbReference>
<dbReference type="PIR" id="B97224">
    <property type="entry name" value="B97224"/>
</dbReference>
<dbReference type="RefSeq" id="NP_349241.1">
    <property type="nucleotide sequence ID" value="NC_003030.1"/>
</dbReference>
<dbReference type="RefSeq" id="WP_010965922.1">
    <property type="nucleotide sequence ID" value="NC_003030.1"/>
</dbReference>
<dbReference type="SMR" id="Q97FU2"/>
<dbReference type="STRING" id="272562.CA_C2634"/>
<dbReference type="KEGG" id="cac:CA_C2634"/>
<dbReference type="PATRIC" id="fig|272562.8.peg.2823"/>
<dbReference type="eggNOG" id="COG0735">
    <property type="taxonomic scope" value="Bacteria"/>
</dbReference>
<dbReference type="HOGENOM" id="CLU_096072_4_2_9"/>
<dbReference type="OrthoDB" id="8659436at2"/>
<dbReference type="Proteomes" id="UP000000814">
    <property type="component" value="Chromosome"/>
</dbReference>
<dbReference type="GO" id="GO:0003700">
    <property type="term" value="F:DNA-binding transcription factor activity"/>
    <property type="evidence" value="ECO:0000315"/>
    <property type="project" value="UniProtKB"/>
</dbReference>
<dbReference type="GO" id="GO:0000976">
    <property type="term" value="F:transcription cis-regulatory region binding"/>
    <property type="evidence" value="ECO:0007669"/>
    <property type="project" value="TreeGrafter"/>
</dbReference>
<dbReference type="GO" id="GO:0008270">
    <property type="term" value="F:zinc ion binding"/>
    <property type="evidence" value="ECO:0007669"/>
    <property type="project" value="TreeGrafter"/>
</dbReference>
<dbReference type="GO" id="GO:0045892">
    <property type="term" value="P:negative regulation of DNA-templated transcription"/>
    <property type="evidence" value="ECO:0000315"/>
    <property type="project" value="UniProtKB"/>
</dbReference>
<dbReference type="GO" id="GO:2000374">
    <property type="term" value="P:regulation of oxygen metabolic process"/>
    <property type="evidence" value="ECO:0000315"/>
    <property type="project" value="UniProtKB"/>
</dbReference>
<dbReference type="GO" id="GO:1900376">
    <property type="term" value="P:regulation of secondary metabolite biosynthetic process"/>
    <property type="evidence" value="ECO:0007669"/>
    <property type="project" value="TreeGrafter"/>
</dbReference>
<dbReference type="GO" id="GO:0009636">
    <property type="term" value="P:response to toxic substance"/>
    <property type="evidence" value="ECO:0007669"/>
    <property type="project" value="UniProtKB-KW"/>
</dbReference>
<dbReference type="CDD" id="cd07153">
    <property type="entry name" value="Fur_like"/>
    <property type="match status" value="1"/>
</dbReference>
<dbReference type="FunFam" id="1.10.10.10:FF:000051">
    <property type="entry name" value="Fur family transcriptional regulator"/>
    <property type="match status" value="1"/>
</dbReference>
<dbReference type="Gene3D" id="3.30.1490.190">
    <property type="match status" value="1"/>
</dbReference>
<dbReference type="Gene3D" id="1.10.10.10">
    <property type="entry name" value="Winged helix-like DNA-binding domain superfamily/Winged helix DNA-binding domain"/>
    <property type="match status" value="1"/>
</dbReference>
<dbReference type="InterPro" id="IPR002481">
    <property type="entry name" value="FUR"/>
</dbReference>
<dbReference type="InterPro" id="IPR043135">
    <property type="entry name" value="Fur_C"/>
</dbReference>
<dbReference type="InterPro" id="IPR036388">
    <property type="entry name" value="WH-like_DNA-bd_sf"/>
</dbReference>
<dbReference type="InterPro" id="IPR036390">
    <property type="entry name" value="WH_DNA-bd_sf"/>
</dbReference>
<dbReference type="PANTHER" id="PTHR33202:SF8">
    <property type="entry name" value="PEROXIDE-RESPONSIVE REPRESSOR PERR"/>
    <property type="match status" value="1"/>
</dbReference>
<dbReference type="PANTHER" id="PTHR33202">
    <property type="entry name" value="ZINC UPTAKE REGULATION PROTEIN"/>
    <property type="match status" value="1"/>
</dbReference>
<dbReference type="Pfam" id="PF01475">
    <property type="entry name" value="FUR"/>
    <property type="match status" value="1"/>
</dbReference>
<dbReference type="SUPFAM" id="SSF46785">
    <property type="entry name" value="Winged helix' DNA-binding domain"/>
    <property type="match status" value="1"/>
</dbReference>
<gene>
    <name type="primary">perR</name>
    <name type="ordered locus">CA_C2634</name>
</gene>
<accession>Q97FU2</accession>
<sequence length="138" mass="15672">MNDISTIFKEKKLKLTPQRIAVYKYLKSTHEHPSAETIYKAIQSDYPTMSLATVYKALKTLAEVHLIQELNVGEGNFRYDANSSSHPHIQCLSCGKVDDIMGITFDNLNKDVSSHTDYDVISNKLYFYGICKDCKDKA</sequence>
<reference key="1">
    <citation type="journal article" date="2001" name="J. Bacteriol.">
        <title>Genome sequence and comparative analysis of the solvent-producing bacterium Clostridium acetobutylicum.</title>
        <authorList>
            <person name="Noelling J."/>
            <person name="Breton G."/>
            <person name="Omelchenko M.V."/>
            <person name="Makarova K.S."/>
            <person name="Zeng Q."/>
            <person name="Gibson R."/>
            <person name="Lee H.M."/>
            <person name="Dubois J."/>
            <person name="Qiu D."/>
            <person name="Hitti J."/>
            <person name="Wolf Y.I."/>
            <person name="Tatusov R.L."/>
            <person name="Sabathe F."/>
            <person name="Doucette-Stamm L.A."/>
            <person name="Soucaille P."/>
            <person name="Daly M.J."/>
            <person name="Bennett G.N."/>
            <person name="Koonin E.V."/>
            <person name="Smith D.R."/>
        </authorList>
    </citation>
    <scope>NUCLEOTIDE SEQUENCE [LARGE SCALE GENOMIC DNA]</scope>
    <source>
        <strain>ATCC 824 / DSM 792 / JCM 1419 / IAM 19013 / LMG 5710 / NBRC 13948 / NRRL B-527 / VKM B-1787 / 2291 / W</strain>
    </source>
</reference>
<reference key="2">
    <citation type="journal article" date="2008" name="Mol. Microbiol.">
        <title>PerR acts as a switch for oxygen tolerance in the strict anaerobe Clostridium acetobutylicum.</title>
        <authorList>
            <person name="Hillmann F."/>
            <person name="Fischer R.J."/>
            <person name="Saint-Prix F."/>
            <person name="Girbal L."/>
            <person name="Bahl H."/>
        </authorList>
    </citation>
    <scope>FUNCTION AS A REPRESSOR</scope>
    <scope>DISRUPTION PHENOTYPE</scope>
    <scope>ROLE IN OXIDATIVE STRESS DEFENSE</scope>
    <source>
        <strain>ATCC 824 / DSM 792 / JCM 1419 / IAM 19013 / LMG 5710 / NBRC 13948 / NRRL B-527 / VKM B-1787 / 2291 / W</strain>
    </source>
</reference>
<reference key="3">
    <citation type="journal article" date="2009" name="J. Bacteriol.">
        <title>The role of PerR in O2-affected gene expression of Clostridium acetobutylicum.</title>
        <authorList>
            <person name="Hillmann F."/>
            <person name="Doring C."/>
            <person name="Riebe O."/>
            <person name="Ehrenreich A."/>
            <person name="Fischer R.J."/>
            <person name="Bahl H."/>
        </authorList>
    </citation>
    <scope>FUNCTION AS A PEROXIDE SENSOR</scope>
    <scope>PERR REGULON</scope>
    <scope>DNA-BINDING</scope>
    <source>
        <strain>ATCC 824 / DSM 792 / JCM 1419 / IAM 19013 / LMG 5710 / NBRC 13948 / NRRL B-527 / VKM B-1787 / 2291 / W</strain>
    </source>
</reference>
<comment type="function">
    <text evidence="2 3">Represses the expression of most of the genes involved in oxidative stress response, such as rbr3A-rbr3B, dfx, rd, nror, fprA1 and fprA2, coding for reverse rubrerythrins, desulfoferrodoxin, rubredoxin, NADH-rubredoxin oxidoreductase (NROR), and oxygen-reducing flavoproteins, respectively. Thus, by controlling primarily oxygen and reactive oxygen species (ROS) scavenging, PerR plays an important role in the oxidative stress defense system in C.acetobutylicum, an obligate anaerobic bacterium. Probably acts as a peroxide sensor.</text>
</comment>
<comment type="disruption phenotype">
    <text evidence="2">Cells lacking this gene exhibit almost complete aerotolerance and increased H(2)O(2) resistance. Deletion of perR does not affect the intracellular level of iron but increases two-fold that of zinc.</text>
</comment>
<comment type="similarity">
    <text evidence="4">Belongs to the Fur family.</text>
</comment>